<protein>
    <recommendedName>
        <fullName evidence="1">Gamma-aminobutyraldehyde dehydrogenase</fullName>
        <shortName evidence="1">ABALDH</shortName>
        <ecNumber evidence="1">1.2.1.19</ecNumber>
    </recommendedName>
    <alternativeName>
        <fullName evidence="1">1-pyrroline dehydrogenase</fullName>
    </alternativeName>
    <alternativeName>
        <fullName evidence="1">4-aminobutanal dehydrogenase</fullName>
    </alternativeName>
    <alternativeName>
        <fullName evidence="1">5-aminopentanal dehydrogenase</fullName>
        <ecNumber evidence="1">1.2.1.-</ecNumber>
    </alternativeName>
</protein>
<keyword id="KW-0520">NAD</keyword>
<keyword id="KW-0560">Oxidoreductase</keyword>
<organism>
    <name type="scientific">Serratia proteamaculans (strain 568)</name>
    <dbReference type="NCBI Taxonomy" id="399741"/>
    <lineage>
        <taxon>Bacteria</taxon>
        <taxon>Pseudomonadati</taxon>
        <taxon>Pseudomonadota</taxon>
        <taxon>Gammaproteobacteria</taxon>
        <taxon>Enterobacterales</taxon>
        <taxon>Yersiniaceae</taxon>
        <taxon>Serratia</taxon>
    </lineage>
</organism>
<comment type="function">
    <text evidence="1">Catalyzes the oxidation 4-aminobutanal (gamma-aminobutyraldehyde) to 4-aminobutanoate (gamma-aminobutyrate or GABA). This is the second step in one of two pathways for putrescine degradation, where putrescine is converted into 4-aminobutanoate via 4-aminobutanal. Also functions as a 5-aminopentanal dehydrogenase in a a L-lysine degradation pathway to succinate that proceeds via cadaverine, glutarate and L-2-hydroxyglutarate.</text>
</comment>
<comment type="catalytic activity">
    <reaction evidence="1">
        <text>4-aminobutanal + NAD(+) + H2O = 4-aminobutanoate + NADH + 2 H(+)</text>
        <dbReference type="Rhea" id="RHEA:19105"/>
        <dbReference type="ChEBI" id="CHEBI:15377"/>
        <dbReference type="ChEBI" id="CHEBI:15378"/>
        <dbReference type="ChEBI" id="CHEBI:57540"/>
        <dbReference type="ChEBI" id="CHEBI:57945"/>
        <dbReference type="ChEBI" id="CHEBI:58264"/>
        <dbReference type="ChEBI" id="CHEBI:59888"/>
        <dbReference type="EC" id="1.2.1.19"/>
    </reaction>
    <physiologicalReaction direction="left-to-right" evidence="1">
        <dbReference type="Rhea" id="RHEA:19106"/>
    </physiologicalReaction>
</comment>
<comment type="catalytic activity">
    <reaction evidence="1">
        <text>5-aminopentanal + NAD(+) + H2O = 5-aminopentanoate + NADH + 2 H(+)</text>
        <dbReference type="Rhea" id="RHEA:61632"/>
        <dbReference type="ChEBI" id="CHEBI:15377"/>
        <dbReference type="ChEBI" id="CHEBI:15378"/>
        <dbReference type="ChEBI" id="CHEBI:57540"/>
        <dbReference type="ChEBI" id="CHEBI:57945"/>
        <dbReference type="ChEBI" id="CHEBI:144896"/>
        <dbReference type="ChEBI" id="CHEBI:356010"/>
    </reaction>
    <physiologicalReaction direction="left-to-right" evidence="1">
        <dbReference type="Rhea" id="RHEA:61633"/>
    </physiologicalReaction>
</comment>
<comment type="pathway">
    <text evidence="1">Amine and polyamine degradation; putrescine degradation; 4-aminobutanoate from 4-aminobutanal: step 1/1.</text>
</comment>
<comment type="pathway">
    <text evidence="1">Amino-acid degradation.</text>
</comment>
<comment type="subunit">
    <text evidence="1">Homotetramer.</text>
</comment>
<comment type="miscellaneous">
    <text evidence="1">4-aminobutanal can spontaneously cyclize to 1-pyrroline, and 5-aminopentanal to 1-piperideine.</text>
</comment>
<comment type="similarity">
    <text evidence="1">Belongs to the aldehyde dehydrogenase family. Gamma-aminobutyraldehyde dehydrogenase subfamily.</text>
</comment>
<accession>A8GHZ8</accession>
<dbReference type="EC" id="1.2.1.19" evidence="1"/>
<dbReference type="EC" id="1.2.1.-" evidence="1"/>
<dbReference type="EMBL" id="CP000826">
    <property type="protein sequence ID" value="ABV42738.1"/>
    <property type="molecule type" value="Genomic_DNA"/>
</dbReference>
<dbReference type="SMR" id="A8GHZ8"/>
<dbReference type="STRING" id="399741.Spro_3642"/>
<dbReference type="KEGG" id="spe:Spro_3642"/>
<dbReference type="eggNOG" id="COG1012">
    <property type="taxonomic scope" value="Bacteria"/>
</dbReference>
<dbReference type="HOGENOM" id="CLU_005391_0_0_6"/>
<dbReference type="OrthoDB" id="9812625at2"/>
<dbReference type="UniPathway" id="UPA00188">
    <property type="reaction ID" value="UER00292"/>
</dbReference>
<dbReference type="GO" id="GO:0019145">
    <property type="term" value="F:aminobutyraldehyde dehydrogenase (NAD+) activity"/>
    <property type="evidence" value="ECO:0007669"/>
    <property type="project" value="UniProtKB-UniRule"/>
</dbReference>
<dbReference type="GO" id="GO:0051287">
    <property type="term" value="F:NAD binding"/>
    <property type="evidence" value="ECO:0007669"/>
    <property type="project" value="UniProtKB-UniRule"/>
</dbReference>
<dbReference type="GO" id="GO:0019477">
    <property type="term" value="P:L-lysine catabolic process"/>
    <property type="evidence" value="ECO:0007669"/>
    <property type="project" value="UniProtKB-UniRule"/>
</dbReference>
<dbReference type="GO" id="GO:0009447">
    <property type="term" value="P:putrescine catabolic process"/>
    <property type="evidence" value="ECO:0007669"/>
    <property type="project" value="UniProtKB-UniRule"/>
</dbReference>
<dbReference type="CDD" id="cd07092">
    <property type="entry name" value="ALDH_ABALDH-YdcW"/>
    <property type="match status" value="1"/>
</dbReference>
<dbReference type="FunFam" id="3.40.605.10:FF:000001">
    <property type="entry name" value="Aldehyde dehydrogenase 1"/>
    <property type="match status" value="1"/>
</dbReference>
<dbReference type="FunFam" id="3.40.309.10:FF:000010">
    <property type="entry name" value="Gamma-aminobutyraldehyde dehydrogenase"/>
    <property type="match status" value="1"/>
</dbReference>
<dbReference type="Gene3D" id="3.40.605.10">
    <property type="entry name" value="Aldehyde Dehydrogenase, Chain A, domain 1"/>
    <property type="match status" value="1"/>
</dbReference>
<dbReference type="Gene3D" id="3.40.309.10">
    <property type="entry name" value="Aldehyde Dehydrogenase, Chain A, domain 2"/>
    <property type="match status" value="1"/>
</dbReference>
<dbReference type="HAMAP" id="MF_01275">
    <property type="entry name" value="Aldedh_Prr"/>
    <property type="match status" value="1"/>
</dbReference>
<dbReference type="InterPro" id="IPR016161">
    <property type="entry name" value="Ald_DH/histidinol_DH"/>
</dbReference>
<dbReference type="InterPro" id="IPR016163">
    <property type="entry name" value="Ald_DH_C"/>
</dbReference>
<dbReference type="InterPro" id="IPR029510">
    <property type="entry name" value="Ald_DH_CS_GLU"/>
</dbReference>
<dbReference type="InterPro" id="IPR016162">
    <property type="entry name" value="Ald_DH_N"/>
</dbReference>
<dbReference type="InterPro" id="IPR015590">
    <property type="entry name" value="Aldehyde_DH_dom"/>
</dbReference>
<dbReference type="InterPro" id="IPR015657">
    <property type="entry name" value="Aminobutyraldehyde_DH"/>
</dbReference>
<dbReference type="InterPro" id="IPR017749">
    <property type="entry name" value="PatD"/>
</dbReference>
<dbReference type="NCBIfam" id="TIGR03374">
    <property type="entry name" value="ABALDH"/>
    <property type="match status" value="1"/>
</dbReference>
<dbReference type="NCBIfam" id="NF010000">
    <property type="entry name" value="PRK13473.1"/>
    <property type="match status" value="1"/>
</dbReference>
<dbReference type="PANTHER" id="PTHR11699">
    <property type="entry name" value="ALDEHYDE DEHYDROGENASE-RELATED"/>
    <property type="match status" value="1"/>
</dbReference>
<dbReference type="Pfam" id="PF00171">
    <property type="entry name" value="Aldedh"/>
    <property type="match status" value="1"/>
</dbReference>
<dbReference type="SUPFAM" id="SSF53720">
    <property type="entry name" value="ALDH-like"/>
    <property type="match status" value="1"/>
</dbReference>
<dbReference type="PROSITE" id="PS00687">
    <property type="entry name" value="ALDEHYDE_DEHYDR_GLU"/>
    <property type="match status" value="1"/>
</dbReference>
<gene>
    <name evidence="1" type="primary">patD</name>
    <name type="ordered locus">Spro_3642</name>
</gene>
<name>ABDH_SERP5</name>
<reference key="1">
    <citation type="submission" date="2007-09" db="EMBL/GenBank/DDBJ databases">
        <title>Complete sequence of chromosome of Serratia proteamaculans 568.</title>
        <authorList>
            <consortium name="US DOE Joint Genome Institute"/>
            <person name="Copeland A."/>
            <person name="Lucas S."/>
            <person name="Lapidus A."/>
            <person name="Barry K."/>
            <person name="Glavina del Rio T."/>
            <person name="Dalin E."/>
            <person name="Tice H."/>
            <person name="Pitluck S."/>
            <person name="Chain P."/>
            <person name="Malfatti S."/>
            <person name="Shin M."/>
            <person name="Vergez L."/>
            <person name="Schmutz J."/>
            <person name="Larimer F."/>
            <person name="Land M."/>
            <person name="Hauser L."/>
            <person name="Kyrpides N."/>
            <person name="Kim E."/>
            <person name="Taghavi S."/>
            <person name="Newman L."/>
            <person name="Vangronsveld J."/>
            <person name="van der Lelie D."/>
            <person name="Richardson P."/>
        </authorList>
    </citation>
    <scope>NUCLEOTIDE SEQUENCE [LARGE SCALE GENOMIC DNA]</scope>
    <source>
        <strain>568</strain>
    </source>
</reference>
<proteinExistence type="inferred from homology"/>
<feature type="chain" id="PRO_1000067395" description="Gamma-aminobutyraldehyde dehydrogenase">
    <location>
        <begin position="1"/>
        <end position="474"/>
    </location>
</feature>
<feature type="active site" evidence="1">
    <location>
        <position position="246"/>
    </location>
</feature>
<feature type="active site" description="Nucleophile" evidence="1">
    <location>
        <position position="280"/>
    </location>
</feature>
<feature type="binding site" evidence="1">
    <location>
        <begin position="146"/>
        <end position="148"/>
    </location>
    <ligand>
        <name>NAD(+)</name>
        <dbReference type="ChEBI" id="CHEBI:57540"/>
    </ligand>
</feature>
<feature type="binding site" evidence="1">
    <location>
        <begin position="172"/>
        <end position="175"/>
    </location>
    <ligand>
        <name>NAD(+)</name>
        <dbReference type="ChEBI" id="CHEBI:57540"/>
    </ligand>
</feature>
<feature type="binding site" evidence="1">
    <location>
        <position position="209"/>
    </location>
    <ligand>
        <name>NAD(+)</name>
        <dbReference type="ChEBI" id="CHEBI:57540"/>
    </ligand>
</feature>
<feature type="binding site" evidence="1">
    <location>
        <begin position="225"/>
        <end position="228"/>
    </location>
    <ligand>
        <name>NAD(+)</name>
        <dbReference type="ChEBI" id="CHEBI:57540"/>
    </ligand>
</feature>
<feature type="binding site" evidence="1">
    <location>
        <position position="280"/>
    </location>
    <ligand>
        <name>NAD(+)</name>
        <dbReference type="ChEBI" id="CHEBI:57540"/>
    </ligand>
</feature>
<evidence type="ECO:0000255" key="1">
    <source>
        <dbReference type="HAMAP-Rule" id="MF_01275"/>
    </source>
</evidence>
<sequence length="474" mass="50984">MQSQLLINGQLVTGQGALLPVYNPATGEVVVQVAEASAEQVDQAVLAADAAFEHWGQTTPKERAEHLLKLADLIDSHAETFARLESINCGKPYHCVLNDELPGVADVFRFFAGASRCLSGLAAGEYLAGHTSMIRRDPLGVVASIAPWNYPLMMAAWKLAPALAAGNCVVLKPSEQTPLTTFKLAELAAGLFPPGVLNVLFGRGASVGDRLTGHNKVRMVSLTGSIATGEHIIGHTASGIKRTHMELGGKAPVLVFDDADLQQVVEGIRSFGFYNAGQDCTAACRIYAQKGIYPQLVKALGEAIGSLKIGPPIDASSELGPLITAQHLERVVGFVERAKALPHVQVVTGGERVNGPGYYFQPTLLAGARQEDEIVQREVFGPVVTVTPFDDEAQVLAWANESDYGLASSLWTRDVGRAHRLSARLQYGCTWVNTHFMLVSEMPHGGQKLSGYGKDMSMYGLEDYTAIRHVMFKH</sequence>